<evidence type="ECO:0000255" key="1">
    <source>
        <dbReference type="HAMAP-Rule" id="MF_00268"/>
    </source>
</evidence>
<evidence type="ECO:0000256" key="2">
    <source>
        <dbReference type="SAM" id="MobiDB-lite"/>
    </source>
</evidence>
<organism>
    <name type="scientific">Sodalis glossinidius</name>
    <dbReference type="NCBI Taxonomy" id="63612"/>
    <lineage>
        <taxon>Bacteria</taxon>
        <taxon>Pseudomonadati</taxon>
        <taxon>Pseudomonadota</taxon>
        <taxon>Gammaproteobacteria</taxon>
        <taxon>Enterobacterales</taxon>
        <taxon>Bruguierivoracaceae</taxon>
        <taxon>Sodalis</taxon>
    </lineage>
</organism>
<reference key="1">
    <citation type="submission" date="2002-09" db="EMBL/GenBank/DDBJ databases">
        <title>Reductive evolution in a lineage of insect symbionts.</title>
        <authorList>
            <person name="Dale C."/>
            <person name="Wang B."/>
            <person name="Moran N.A."/>
            <person name="Ochman H."/>
        </authorList>
    </citation>
    <scope>NUCLEOTIDE SEQUENCE [GENOMIC DNA]</scope>
</reference>
<name>RECA_SODGL</name>
<comment type="function">
    <text evidence="1">Can catalyze the hydrolysis of ATP in the presence of single-stranded DNA, the ATP-dependent uptake of single-stranded DNA by duplex DNA, and the ATP-dependent hybridization of homologous single-stranded DNAs. It interacts with LexA causing its activation and leading to its autocatalytic cleavage.</text>
</comment>
<comment type="subcellular location">
    <subcellularLocation>
        <location evidence="1">Cytoplasm</location>
    </subcellularLocation>
</comment>
<comment type="similarity">
    <text evidence="1">Belongs to the RecA family.</text>
</comment>
<accession>P62220</accession>
<protein>
    <recommendedName>
        <fullName evidence="1">Protein RecA</fullName>
    </recommendedName>
    <alternativeName>
        <fullName evidence="1">Recombinase A</fullName>
    </alternativeName>
</protein>
<feature type="chain" id="PRO_0000122835" description="Protein RecA">
    <location>
        <begin position="1"/>
        <end position="355"/>
    </location>
</feature>
<feature type="region of interest" description="Disordered" evidence="2">
    <location>
        <begin position="335"/>
        <end position="355"/>
    </location>
</feature>
<feature type="compositionally biased region" description="Acidic residues" evidence="2">
    <location>
        <begin position="341"/>
        <end position="355"/>
    </location>
</feature>
<feature type="binding site" evidence="1">
    <location>
        <begin position="67"/>
        <end position="74"/>
    </location>
    <ligand>
        <name>ATP</name>
        <dbReference type="ChEBI" id="CHEBI:30616"/>
    </ligand>
</feature>
<dbReference type="EMBL" id="AY148454">
    <property type="protein sequence ID" value="AAN73888.1"/>
    <property type="molecule type" value="Genomic_DNA"/>
</dbReference>
<dbReference type="SMR" id="P62220"/>
<dbReference type="OMA" id="DSKMGLH"/>
<dbReference type="GO" id="GO:0005829">
    <property type="term" value="C:cytosol"/>
    <property type="evidence" value="ECO:0007669"/>
    <property type="project" value="TreeGrafter"/>
</dbReference>
<dbReference type="GO" id="GO:0005524">
    <property type="term" value="F:ATP binding"/>
    <property type="evidence" value="ECO:0007669"/>
    <property type="project" value="UniProtKB-UniRule"/>
</dbReference>
<dbReference type="GO" id="GO:0016887">
    <property type="term" value="F:ATP hydrolysis activity"/>
    <property type="evidence" value="ECO:0007669"/>
    <property type="project" value="InterPro"/>
</dbReference>
<dbReference type="GO" id="GO:0140664">
    <property type="term" value="F:ATP-dependent DNA damage sensor activity"/>
    <property type="evidence" value="ECO:0007669"/>
    <property type="project" value="InterPro"/>
</dbReference>
<dbReference type="GO" id="GO:0003684">
    <property type="term" value="F:damaged DNA binding"/>
    <property type="evidence" value="ECO:0007669"/>
    <property type="project" value="UniProtKB-UniRule"/>
</dbReference>
<dbReference type="GO" id="GO:0003697">
    <property type="term" value="F:single-stranded DNA binding"/>
    <property type="evidence" value="ECO:0007669"/>
    <property type="project" value="UniProtKB-UniRule"/>
</dbReference>
<dbReference type="GO" id="GO:0006310">
    <property type="term" value="P:DNA recombination"/>
    <property type="evidence" value="ECO:0007669"/>
    <property type="project" value="UniProtKB-UniRule"/>
</dbReference>
<dbReference type="GO" id="GO:0006281">
    <property type="term" value="P:DNA repair"/>
    <property type="evidence" value="ECO:0007669"/>
    <property type="project" value="UniProtKB-UniRule"/>
</dbReference>
<dbReference type="GO" id="GO:0009432">
    <property type="term" value="P:SOS response"/>
    <property type="evidence" value="ECO:0007669"/>
    <property type="project" value="UniProtKB-UniRule"/>
</dbReference>
<dbReference type="CDD" id="cd00983">
    <property type="entry name" value="RecA"/>
    <property type="match status" value="1"/>
</dbReference>
<dbReference type="FunFam" id="3.40.50.300:FF:000087">
    <property type="entry name" value="Recombinase RecA"/>
    <property type="match status" value="1"/>
</dbReference>
<dbReference type="Gene3D" id="3.40.50.300">
    <property type="entry name" value="P-loop containing nucleotide triphosphate hydrolases"/>
    <property type="match status" value="1"/>
</dbReference>
<dbReference type="HAMAP" id="MF_00268">
    <property type="entry name" value="RecA"/>
    <property type="match status" value="1"/>
</dbReference>
<dbReference type="InterPro" id="IPR003593">
    <property type="entry name" value="AAA+_ATPase"/>
</dbReference>
<dbReference type="InterPro" id="IPR013765">
    <property type="entry name" value="DNA_recomb/repair_RecA"/>
</dbReference>
<dbReference type="InterPro" id="IPR020584">
    <property type="entry name" value="DNA_recomb/repair_RecA_CS"/>
</dbReference>
<dbReference type="InterPro" id="IPR027417">
    <property type="entry name" value="P-loop_NTPase"/>
</dbReference>
<dbReference type="InterPro" id="IPR049261">
    <property type="entry name" value="RecA-like_C"/>
</dbReference>
<dbReference type="InterPro" id="IPR049428">
    <property type="entry name" value="RecA-like_N"/>
</dbReference>
<dbReference type="InterPro" id="IPR020588">
    <property type="entry name" value="RecA_ATP-bd"/>
</dbReference>
<dbReference type="InterPro" id="IPR023400">
    <property type="entry name" value="RecA_C_sf"/>
</dbReference>
<dbReference type="InterPro" id="IPR020587">
    <property type="entry name" value="RecA_monomer-monomer_interface"/>
</dbReference>
<dbReference type="NCBIfam" id="TIGR02012">
    <property type="entry name" value="tigrfam_recA"/>
    <property type="match status" value="1"/>
</dbReference>
<dbReference type="PANTHER" id="PTHR45900:SF1">
    <property type="entry name" value="MITOCHONDRIAL DNA REPAIR PROTEIN RECA HOMOLOG-RELATED"/>
    <property type="match status" value="1"/>
</dbReference>
<dbReference type="PANTHER" id="PTHR45900">
    <property type="entry name" value="RECA"/>
    <property type="match status" value="1"/>
</dbReference>
<dbReference type="Pfam" id="PF00154">
    <property type="entry name" value="RecA"/>
    <property type="match status" value="1"/>
</dbReference>
<dbReference type="Pfam" id="PF21096">
    <property type="entry name" value="RecA_C"/>
    <property type="match status" value="1"/>
</dbReference>
<dbReference type="PRINTS" id="PR00142">
    <property type="entry name" value="RECA"/>
</dbReference>
<dbReference type="SMART" id="SM00382">
    <property type="entry name" value="AAA"/>
    <property type="match status" value="1"/>
</dbReference>
<dbReference type="SUPFAM" id="SSF52540">
    <property type="entry name" value="P-loop containing nucleoside triphosphate hydrolases"/>
    <property type="match status" value="1"/>
</dbReference>
<dbReference type="SUPFAM" id="SSF54752">
    <property type="entry name" value="RecA protein, C-terminal domain"/>
    <property type="match status" value="1"/>
</dbReference>
<dbReference type="PROSITE" id="PS00321">
    <property type="entry name" value="RECA_1"/>
    <property type="match status" value="1"/>
</dbReference>
<dbReference type="PROSITE" id="PS50162">
    <property type="entry name" value="RECA_2"/>
    <property type="match status" value="1"/>
</dbReference>
<dbReference type="PROSITE" id="PS50163">
    <property type="entry name" value="RECA_3"/>
    <property type="match status" value="1"/>
</dbReference>
<keyword id="KW-0067">ATP-binding</keyword>
<keyword id="KW-0963">Cytoplasm</keyword>
<keyword id="KW-0227">DNA damage</keyword>
<keyword id="KW-0233">DNA recombination</keyword>
<keyword id="KW-0234">DNA repair</keyword>
<keyword id="KW-0238">DNA-binding</keyword>
<keyword id="KW-0547">Nucleotide-binding</keyword>
<keyword id="KW-0742">SOS response</keyword>
<proteinExistence type="inferred from homology"/>
<gene>
    <name evidence="1" type="primary">recA</name>
</gene>
<sequence length="355" mass="38074">MAIDENKQKALAAALGQIEKQFGKGSIMRLGEDRSMDVETISTGSLSLDIALGAGGLPMGRIVEIYGPESSGKTTLTLQVIAAAQREVKTCAFIDAEHALDPIYAKKLGVDIDNLLCSQPDTGEQALEICDALTRSGAVDVIIVDSVAALTPKAEIEGEIGDSHMGLAARMMSQAMRKLAGNLKNANTLLIFINQIRMKIGVMFGNPETTTGGNALKFYASVRLDIRRIGSVKEGDVVVGSETRVKVVKNKVAAPFKQAEFQIMYGEGINIRGELVDLGVKHKLIEKAGAWYSYNGEKIGQGKANACSFLKDHPEVAAELDKKLRDMLLHSAEGNSLVSDVESEDEGASESNEEF</sequence>